<protein>
    <recommendedName>
        <fullName evidence="1">Trehalose-6-phosphate synthase</fullName>
        <shortName evidence="1">TPS</shortName>
        <ecNumber evidence="1">2.4.1.15</ecNumber>
    </recommendedName>
    <alternativeName>
        <fullName evidence="1">Alpha,alpha-trehalose-phosphate synthase [UDP-forming]</fullName>
    </alternativeName>
    <alternativeName>
        <fullName evidence="1">Osmoregulatory trehalose synthesis protein A</fullName>
        <shortName evidence="1">OtsA</shortName>
    </alternativeName>
    <alternativeName>
        <fullName evidence="1">UDP-glucose-glucosephosphate glucosyltransferase</fullName>
    </alternativeName>
</protein>
<gene>
    <name evidence="1" type="primary">otsA</name>
    <name type="ordered locus">KPN78578_23570</name>
    <name type="ORF">KPN_02392</name>
</gene>
<dbReference type="EC" id="2.4.1.15" evidence="1"/>
<dbReference type="EMBL" id="CP000647">
    <property type="protein sequence ID" value="ABR77818.1"/>
    <property type="molecule type" value="Genomic_DNA"/>
</dbReference>
<dbReference type="RefSeq" id="WP_004175414.1">
    <property type="nucleotide sequence ID" value="NC_009648.1"/>
</dbReference>
<dbReference type="SMR" id="A6TB47"/>
<dbReference type="STRING" id="272620.KPN_02392"/>
<dbReference type="CAZy" id="GT20">
    <property type="family name" value="Glycosyltransferase Family 20"/>
</dbReference>
<dbReference type="jPOST" id="A6TB47"/>
<dbReference type="PaxDb" id="272620-KPN_02392"/>
<dbReference type="EnsemblBacteria" id="ABR77818">
    <property type="protein sequence ID" value="ABR77818"/>
    <property type="gene ID" value="KPN_02392"/>
</dbReference>
<dbReference type="KEGG" id="kpn:KPN_02392"/>
<dbReference type="HOGENOM" id="CLU_002351_7_1_6"/>
<dbReference type="UniPathway" id="UPA00299"/>
<dbReference type="Proteomes" id="UP000000265">
    <property type="component" value="Chromosome"/>
</dbReference>
<dbReference type="GO" id="GO:0003825">
    <property type="term" value="F:alpha,alpha-trehalose-phosphate synthase (UDP-forming) activity"/>
    <property type="evidence" value="ECO:0007669"/>
    <property type="project" value="UniProtKB-EC"/>
</dbReference>
<dbReference type="GO" id="GO:0005992">
    <property type="term" value="P:trehalose biosynthetic process"/>
    <property type="evidence" value="ECO:0007669"/>
    <property type="project" value="UniProtKB-UniPathway"/>
</dbReference>
<dbReference type="CDD" id="cd03788">
    <property type="entry name" value="GT20_TPS"/>
    <property type="match status" value="1"/>
</dbReference>
<dbReference type="FunFam" id="3.40.50.2000:FF:000024">
    <property type="entry name" value="Trehalose-6-phosphate synthase"/>
    <property type="match status" value="1"/>
</dbReference>
<dbReference type="Gene3D" id="3.40.50.2000">
    <property type="entry name" value="Glycogen Phosphorylase B"/>
    <property type="match status" value="2"/>
</dbReference>
<dbReference type="InterPro" id="IPR001830">
    <property type="entry name" value="Glyco_trans_20"/>
</dbReference>
<dbReference type="InterPro" id="IPR012766">
    <property type="entry name" value="Trehalose_OtsA"/>
</dbReference>
<dbReference type="NCBIfam" id="NF007513">
    <property type="entry name" value="PRK10117.1"/>
    <property type="match status" value="1"/>
</dbReference>
<dbReference type="NCBIfam" id="TIGR02400">
    <property type="entry name" value="trehalose_OtsA"/>
    <property type="match status" value="1"/>
</dbReference>
<dbReference type="PANTHER" id="PTHR10788:SF106">
    <property type="entry name" value="BCDNA.GH08860"/>
    <property type="match status" value="1"/>
</dbReference>
<dbReference type="PANTHER" id="PTHR10788">
    <property type="entry name" value="TREHALOSE-6-PHOSPHATE SYNTHASE"/>
    <property type="match status" value="1"/>
</dbReference>
<dbReference type="Pfam" id="PF00982">
    <property type="entry name" value="Glyco_transf_20"/>
    <property type="match status" value="1"/>
</dbReference>
<dbReference type="SUPFAM" id="SSF53756">
    <property type="entry name" value="UDP-Glycosyltransferase/glycogen phosphorylase"/>
    <property type="match status" value="1"/>
</dbReference>
<accession>A6TB47</accession>
<keyword id="KW-0328">Glycosyltransferase</keyword>
<keyword id="KW-0808">Transferase</keyword>
<name>OTSA_KLEP7</name>
<proteinExistence type="inferred from homology"/>
<feature type="chain" id="PRO_0000348902" description="Trehalose-6-phosphate synthase">
    <location>
        <begin position="1"/>
        <end position="474"/>
    </location>
</feature>
<feature type="binding site" evidence="1">
    <location>
        <position position="10"/>
    </location>
    <ligand>
        <name>D-glucose 6-phosphate</name>
        <dbReference type="ChEBI" id="CHEBI:61548"/>
    </ligand>
</feature>
<feature type="binding site" evidence="1">
    <location>
        <begin position="22"/>
        <end position="23"/>
    </location>
    <ligand>
        <name>UDP-alpha-D-glucose</name>
        <dbReference type="ChEBI" id="CHEBI:58885"/>
    </ligand>
</feature>
<feature type="binding site" evidence="1">
    <location>
        <position position="77"/>
    </location>
    <ligand>
        <name>D-glucose 6-phosphate</name>
        <dbReference type="ChEBI" id="CHEBI:61548"/>
    </ligand>
</feature>
<feature type="binding site" evidence="1">
    <location>
        <position position="131"/>
    </location>
    <ligand>
        <name>D-glucose 6-phosphate</name>
        <dbReference type="ChEBI" id="CHEBI:61548"/>
    </ligand>
</feature>
<feature type="binding site" evidence="1">
    <location>
        <position position="263"/>
    </location>
    <ligand>
        <name>UDP-alpha-D-glucose</name>
        <dbReference type="ChEBI" id="CHEBI:58885"/>
    </ligand>
</feature>
<feature type="binding site" evidence="1">
    <location>
        <position position="268"/>
    </location>
    <ligand>
        <name>UDP-alpha-D-glucose</name>
        <dbReference type="ChEBI" id="CHEBI:58885"/>
    </ligand>
</feature>
<feature type="binding site" evidence="1">
    <location>
        <position position="301"/>
    </location>
    <ligand>
        <name>D-glucose 6-phosphate</name>
        <dbReference type="ChEBI" id="CHEBI:61548"/>
    </ligand>
</feature>
<feature type="binding site" evidence="1">
    <location>
        <position position="340"/>
    </location>
    <ligand>
        <name>UDP-alpha-D-glucose</name>
        <dbReference type="ChEBI" id="CHEBI:58885"/>
    </ligand>
</feature>
<feature type="binding site" evidence="1">
    <location>
        <begin position="366"/>
        <end position="370"/>
    </location>
    <ligand>
        <name>UDP-alpha-D-glucose</name>
        <dbReference type="ChEBI" id="CHEBI:58885"/>
    </ligand>
</feature>
<feature type="site" description="Involved in alpha anomer selectivity" evidence="1">
    <location>
        <position position="86"/>
    </location>
</feature>
<feature type="site" description="Involved in alpha anomer selectivity" evidence="1">
    <location>
        <position position="156"/>
    </location>
</feature>
<reference key="1">
    <citation type="submission" date="2006-09" db="EMBL/GenBank/DDBJ databases">
        <authorList>
            <consortium name="The Klebsiella pneumonia Genome Sequencing Project"/>
            <person name="McClelland M."/>
            <person name="Sanderson E.K."/>
            <person name="Spieth J."/>
            <person name="Clifton W.S."/>
            <person name="Latreille P."/>
            <person name="Sabo A."/>
            <person name="Pepin K."/>
            <person name="Bhonagiri V."/>
            <person name="Porwollik S."/>
            <person name="Ali J."/>
            <person name="Wilson R.K."/>
        </authorList>
    </citation>
    <scope>NUCLEOTIDE SEQUENCE [LARGE SCALE GENOMIC DNA]</scope>
    <source>
        <strain>ATCC 700721 / MGH 78578</strain>
    </source>
</reference>
<evidence type="ECO:0000250" key="1">
    <source>
        <dbReference type="UniProtKB" id="P31677"/>
    </source>
</evidence>
<comment type="function">
    <text evidence="1">Probably involved in the osmoprotection via the biosynthesis of trehalose. Catalyzes the transfer of glucose from UDP-alpha-D-glucose (UDP-Glc) to D-glucose 6-phosphate (Glc-6-P) to form trehalose-6-phosphate. Acts with retention of the anomeric configuration of the UDP-sugar donor.</text>
</comment>
<comment type="catalytic activity">
    <reaction evidence="1">
        <text>D-glucose 6-phosphate + UDP-alpha-D-glucose = alpha,alpha-trehalose 6-phosphate + UDP + H(+)</text>
        <dbReference type="Rhea" id="RHEA:18889"/>
        <dbReference type="ChEBI" id="CHEBI:15378"/>
        <dbReference type="ChEBI" id="CHEBI:58223"/>
        <dbReference type="ChEBI" id="CHEBI:58429"/>
        <dbReference type="ChEBI" id="CHEBI:58885"/>
        <dbReference type="ChEBI" id="CHEBI:61548"/>
        <dbReference type="EC" id="2.4.1.15"/>
    </reaction>
</comment>
<comment type="pathway">
    <text evidence="1">Glycan biosynthesis; trehalose biosynthesis.</text>
</comment>
<comment type="subunit">
    <text evidence="1">Homotetramer.</text>
</comment>
<comment type="similarity">
    <text evidence="1">Belongs to the glycosyltransferase 20 family.</text>
</comment>
<sequence>MSRLVVVSNRIALPDDKKSSAGGLAVGILGALRAAGGLWFGWSGEIGDDQQPLKQVSRGNISWASFNLNERDHDEYYNQFSNAVLWPAFHYRLDLVSFQREAWEGYLRVNAMLADKLLPLIEPDDTLWIHDYHLLPFASELRKRGVNNRIGFFLHIPFPTPEIFNALPPHAELLEQLCDYDLLGFQTESDRTAFLDSIAMQTRLSDLGDKRYQAWGKAFSTEVYPIGIDPDEITRNAKGPLPPKLAQLKNELKNVKNIFSVERLDYSKGLPERFLAYETLLEKYPQHHGKIRYTQIAPTSRGDVQAYQDIRHQLETAAGRINGQFGQLGWTPLYYLNQHFDRKLLMKVFRYSDVGLVTPLRDGMNLVAKEYVAAQDPDNPGVLVLSQFAGAAQELTSALIVNPYDRDEVAAALDRALSMPLAERIARHSAMLDVIRENDIHNWQARFVEDLQHISPRSEESRLRGKIATFPKLA</sequence>
<organism>
    <name type="scientific">Klebsiella pneumoniae subsp. pneumoniae (strain ATCC 700721 / MGH 78578)</name>
    <dbReference type="NCBI Taxonomy" id="272620"/>
    <lineage>
        <taxon>Bacteria</taxon>
        <taxon>Pseudomonadati</taxon>
        <taxon>Pseudomonadota</taxon>
        <taxon>Gammaproteobacteria</taxon>
        <taxon>Enterobacterales</taxon>
        <taxon>Enterobacteriaceae</taxon>
        <taxon>Klebsiella/Raoultella group</taxon>
        <taxon>Klebsiella</taxon>
        <taxon>Klebsiella pneumoniae complex</taxon>
    </lineage>
</organism>